<protein>
    <recommendedName>
        <fullName>Uncharacterized protein HI_0732</fullName>
    </recommendedName>
</protein>
<accession>P44045</accession>
<proteinExistence type="evidence at protein level"/>
<dbReference type="EMBL" id="L42023">
    <property type="protein sequence ID" value="AAC22393.1"/>
    <property type="molecule type" value="Genomic_DNA"/>
</dbReference>
<dbReference type="PIR" id="I64012">
    <property type="entry name" value="I64012"/>
</dbReference>
<dbReference type="EnsemblBacteria" id="AAC22393">
    <property type="protein sequence ID" value="AAC22393"/>
    <property type="gene ID" value="HI_0732"/>
</dbReference>
<dbReference type="KEGG" id="hin:HI_0732"/>
<dbReference type="HOGENOM" id="CLU_3118408_0_0_6"/>
<dbReference type="Proteomes" id="UP000000579">
    <property type="component" value="Chromosome"/>
</dbReference>
<gene>
    <name type="ordered locus">HI_0732</name>
</gene>
<feature type="chain" id="PRO_0000077952" description="Uncharacterized protein HI_0732">
    <location>
        <begin position="1"/>
        <end position="50"/>
    </location>
</feature>
<organism>
    <name type="scientific">Haemophilus influenzae (strain ATCC 51907 / DSM 11121 / KW20 / Rd)</name>
    <dbReference type="NCBI Taxonomy" id="71421"/>
    <lineage>
        <taxon>Bacteria</taxon>
        <taxon>Pseudomonadati</taxon>
        <taxon>Pseudomonadota</taxon>
        <taxon>Gammaproteobacteria</taxon>
        <taxon>Pasteurellales</taxon>
        <taxon>Pasteurellaceae</taxon>
        <taxon>Haemophilus</taxon>
    </lineage>
</organism>
<name>Y732_HAEIN</name>
<keyword id="KW-1185">Reference proteome</keyword>
<reference key="1">
    <citation type="journal article" date="1995" name="Science">
        <title>Whole-genome random sequencing and assembly of Haemophilus influenzae Rd.</title>
        <authorList>
            <person name="Fleischmann R.D."/>
            <person name="Adams M.D."/>
            <person name="White O."/>
            <person name="Clayton R.A."/>
            <person name="Kirkness E.F."/>
            <person name="Kerlavage A.R."/>
            <person name="Bult C.J."/>
            <person name="Tomb J.-F."/>
            <person name="Dougherty B.A."/>
            <person name="Merrick J.M."/>
            <person name="McKenney K."/>
            <person name="Sutton G.G."/>
            <person name="FitzHugh W."/>
            <person name="Fields C.A."/>
            <person name="Gocayne J.D."/>
            <person name="Scott J.D."/>
            <person name="Shirley R."/>
            <person name="Liu L.-I."/>
            <person name="Glodek A."/>
            <person name="Kelley J.M."/>
            <person name="Weidman J.F."/>
            <person name="Phillips C.A."/>
            <person name="Spriggs T."/>
            <person name="Hedblom E."/>
            <person name="Cotton M.D."/>
            <person name="Utterback T.R."/>
            <person name="Hanna M.C."/>
            <person name="Nguyen D.T."/>
            <person name="Saudek D.M."/>
            <person name="Brandon R.C."/>
            <person name="Fine L.D."/>
            <person name="Fritchman J.L."/>
            <person name="Fuhrmann J.L."/>
            <person name="Geoghagen N.S.M."/>
            <person name="Gnehm C.L."/>
            <person name="McDonald L.A."/>
            <person name="Small K.V."/>
            <person name="Fraser C.M."/>
            <person name="Smith H.O."/>
            <person name="Venter J.C."/>
        </authorList>
    </citation>
    <scope>NUCLEOTIDE SEQUENCE [LARGE SCALE GENOMIC DNA]</scope>
    <source>
        <strain>ATCC 51907 / DSM 11121 / KW20 / Rd</strain>
    </source>
</reference>
<reference key="2">
    <citation type="journal article" date="2000" name="Electrophoresis">
        <title>Two-dimensional map of the proteome of Haemophilus influenzae.</title>
        <authorList>
            <person name="Langen H."/>
            <person name="Takacs B."/>
            <person name="Evers S."/>
            <person name="Berndt P."/>
            <person name="Lahm H.W."/>
            <person name="Wipf B."/>
            <person name="Gray C."/>
            <person name="Fountoulakis M."/>
        </authorList>
    </citation>
    <scope>IDENTIFICATION BY MASS SPECTROMETRY</scope>
    <source>
        <strain>ATCC 51907 / DSM 11121 / KW20 / Rd</strain>
    </source>
</reference>
<sequence length="50" mass="5491">MLFSGDELANNTVLELRAQGQLSAFNKQPNLTFETDAPAILQQAVAQTRE</sequence>